<organism>
    <name type="scientific">Helicobacter hepaticus (strain ATCC 51449 / 3B1)</name>
    <dbReference type="NCBI Taxonomy" id="235279"/>
    <lineage>
        <taxon>Bacteria</taxon>
        <taxon>Pseudomonadati</taxon>
        <taxon>Campylobacterota</taxon>
        <taxon>Epsilonproteobacteria</taxon>
        <taxon>Campylobacterales</taxon>
        <taxon>Helicobacteraceae</taxon>
        <taxon>Helicobacter</taxon>
    </lineage>
</organism>
<keyword id="KW-0665">Pyrimidine biosynthesis</keyword>
<keyword id="KW-1185">Reference proteome</keyword>
<keyword id="KW-0808">Transferase</keyword>
<reference key="1">
    <citation type="journal article" date="2003" name="Proc. Natl. Acad. Sci. U.S.A.">
        <title>The complete genome sequence of the carcinogenic bacterium Helicobacter hepaticus.</title>
        <authorList>
            <person name="Suerbaum S."/>
            <person name="Josenhans C."/>
            <person name="Sterzenbach T."/>
            <person name="Drescher B."/>
            <person name="Brandt P."/>
            <person name="Bell M."/>
            <person name="Droege M."/>
            <person name="Fartmann B."/>
            <person name="Fischer H.-P."/>
            <person name="Ge Z."/>
            <person name="Hoerster A."/>
            <person name="Holland R."/>
            <person name="Klein K."/>
            <person name="Koenig J."/>
            <person name="Macko L."/>
            <person name="Mendz G.L."/>
            <person name="Nyakatura G."/>
            <person name="Schauer D.B."/>
            <person name="Shen Z."/>
            <person name="Weber J."/>
            <person name="Frosch M."/>
            <person name="Fox J.G."/>
        </authorList>
    </citation>
    <scope>NUCLEOTIDE SEQUENCE [LARGE SCALE GENOMIC DNA]</scope>
    <source>
        <strain>ATCC 51449 / 3B1</strain>
    </source>
</reference>
<gene>
    <name evidence="1" type="primary">pyrB</name>
    <name type="ordered locus">HH_0521</name>
</gene>
<feature type="chain" id="PRO_0000113140" description="Aspartate carbamoyltransferase catalytic subunit">
    <location>
        <begin position="1"/>
        <end position="297"/>
    </location>
</feature>
<feature type="binding site" evidence="1">
    <location>
        <position position="52"/>
    </location>
    <ligand>
        <name>carbamoyl phosphate</name>
        <dbReference type="ChEBI" id="CHEBI:58228"/>
    </ligand>
</feature>
<feature type="binding site" evidence="1">
    <location>
        <position position="53"/>
    </location>
    <ligand>
        <name>carbamoyl phosphate</name>
        <dbReference type="ChEBI" id="CHEBI:58228"/>
    </ligand>
</feature>
<feature type="binding site" evidence="1">
    <location>
        <position position="80"/>
    </location>
    <ligand>
        <name>L-aspartate</name>
        <dbReference type="ChEBI" id="CHEBI:29991"/>
    </ligand>
</feature>
<feature type="binding site" evidence="1">
    <location>
        <position position="102"/>
    </location>
    <ligand>
        <name>carbamoyl phosphate</name>
        <dbReference type="ChEBI" id="CHEBI:58228"/>
    </ligand>
</feature>
<feature type="binding site" evidence="1">
    <location>
        <position position="130"/>
    </location>
    <ligand>
        <name>carbamoyl phosphate</name>
        <dbReference type="ChEBI" id="CHEBI:58228"/>
    </ligand>
</feature>
<feature type="binding site" evidence="1">
    <location>
        <position position="133"/>
    </location>
    <ligand>
        <name>carbamoyl phosphate</name>
        <dbReference type="ChEBI" id="CHEBI:58228"/>
    </ligand>
</feature>
<feature type="binding site" evidence="1">
    <location>
        <position position="167"/>
    </location>
    <ligand>
        <name>L-aspartate</name>
        <dbReference type="ChEBI" id="CHEBI:29991"/>
    </ligand>
</feature>
<feature type="binding site" evidence="1">
    <location>
        <position position="217"/>
    </location>
    <ligand>
        <name>L-aspartate</name>
        <dbReference type="ChEBI" id="CHEBI:29991"/>
    </ligand>
</feature>
<feature type="binding site" evidence="1">
    <location>
        <position position="256"/>
    </location>
    <ligand>
        <name>carbamoyl phosphate</name>
        <dbReference type="ChEBI" id="CHEBI:58228"/>
    </ligand>
</feature>
<feature type="binding site" evidence="1">
    <location>
        <position position="257"/>
    </location>
    <ligand>
        <name>carbamoyl phosphate</name>
        <dbReference type="ChEBI" id="CHEBI:58228"/>
    </ligand>
</feature>
<evidence type="ECO:0000255" key="1">
    <source>
        <dbReference type="HAMAP-Rule" id="MF_00001"/>
    </source>
</evidence>
<comment type="function">
    <text evidence="1">Catalyzes the condensation of carbamoyl phosphate and aspartate to form carbamoyl aspartate and inorganic phosphate, the committed step in the de novo pyrimidine nucleotide biosynthesis pathway.</text>
</comment>
<comment type="catalytic activity">
    <reaction evidence="1">
        <text>carbamoyl phosphate + L-aspartate = N-carbamoyl-L-aspartate + phosphate + H(+)</text>
        <dbReference type="Rhea" id="RHEA:20013"/>
        <dbReference type="ChEBI" id="CHEBI:15378"/>
        <dbReference type="ChEBI" id="CHEBI:29991"/>
        <dbReference type="ChEBI" id="CHEBI:32814"/>
        <dbReference type="ChEBI" id="CHEBI:43474"/>
        <dbReference type="ChEBI" id="CHEBI:58228"/>
        <dbReference type="EC" id="2.1.3.2"/>
    </reaction>
</comment>
<comment type="pathway">
    <text evidence="1">Pyrimidine metabolism; UMP biosynthesis via de novo pathway; (S)-dihydroorotate from bicarbonate: step 2/3.</text>
</comment>
<comment type="subunit">
    <text evidence="1">Heterododecamer (2C3:3R2) of six catalytic PyrB chains organized as two trimers (C3), and six regulatory PyrI chains organized as three dimers (R2).</text>
</comment>
<comment type="similarity">
    <text evidence="1">Belongs to the aspartate/ornithine carbamoyltransferase superfamily. ATCase family.</text>
</comment>
<name>PYRB_HELHP</name>
<dbReference type="EC" id="2.1.3.2" evidence="1"/>
<dbReference type="EMBL" id="AE017125">
    <property type="protein sequence ID" value="AAP77118.1"/>
    <property type="molecule type" value="Genomic_DNA"/>
</dbReference>
<dbReference type="RefSeq" id="WP_011115363.1">
    <property type="nucleotide sequence ID" value="NC_004917.1"/>
</dbReference>
<dbReference type="SMR" id="Q7VIT3"/>
<dbReference type="STRING" id="235279.HH_0521"/>
<dbReference type="KEGG" id="hhe:HH_0521"/>
<dbReference type="eggNOG" id="COG0540">
    <property type="taxonomic scope" value="Bacteria"/>
</dbReference>
<dbReference type="HOGENOM" id="CLU_043846_2_0_7"/>
<dbReference type="OrthoDB" id="9774690at2"/>
<dbReference type="UniPathway" id="UPA00070">
    <property type="reaction ID" value="UER00116"/>
</dbReference>
<dbReference type="Proteomes" id="UP000002495">
    <property type="component" value="Chromosome"/>
</dbReference>
<dbReference type="GO" id="GO:0005829">
    <property type="term" value="C:cytosol"/>
    <property type="evidence" value="ECO:0007669"/>
    <property type="project" value="TreeGrafter"/>
</dbReference>
<dbReference type="GO" id="GO:0016597">
    <property type="term" value="F:amino acid binding"/>
    <property type="evidence" value="ECO:0007669"/>
    <property type="project" value="InterPro"/>
</dbReference>
<dbReference type="GO" id="GO:0004070">
    <property type="term" value="F:aspartate carbamoyltransferase activity"/>
    <property type="evidence" value="ECO:0007669"/>
    <property type="project" value="UniProtKB-UniRule"/>
</dbReference>
<dbReference type="GO" id="GO:0006207">
    <property type="term" value="P:'de novo' pyrimidine nucleobase biosynthetic process"/>
    <property type="evidence" value="ECO:0007669"/>
    <property type="project" value="InterPro"/>
</dbReference>
<dbReference type="GO" id="GO:0044205">
    <property type="term" value="P:'de novo' UMP biosynthetic process"/>
    <property type="evidence" value="ECO:0007669"/>
    <property type="project" value="UniProtKB-UniRule"/>
</dbReference>
<dbReference type="GO" id="GO:0006520">
    <property type="term" value="P:amino acid metabolic process"/>
    <property type="evidence" value="ECO:0007669"/>
    <property type="project" value="InterPro"/>
</dbReference>
<dbReference type="Gene3D" id="3.40.50.1370">
    <property type="entry name" value="Aspartate/ornithine carbamoyltransferase"/>
    <property type="match status" value="2"/>
</dbReference>
<dbReference type="HAMAP" id="MF_00001">
    <property type="entry name" value="Asp_carb_tr"/>
    <property type="match status" value="1"/>
</dbReference>
<dbReference type="InterPro" id="IPR006132">
    <property type="entry name" value="Asp/Orn_carbamoyltranf_P-bd"/>
</dbReference>
<dbReference type="InterPro" id="IPR006130">
    <property type="entry name" value="Asp/Orn_carbamoylTrfase"/>
</dbReference>
<dbReference type="InterPro" id="IPR036901">
    <property type="entry name" value="Asp/Orn_carbamoylTrfase_sf"/>
</dbReference>
<dbReference type="InterPro" id="IPR002082">
    <property type="entry name" value="Asp_carbamoyltransf"/>
</dbReference>
<dbReference type="InterPro" id="IPR006131">
    <property type="entry name" value="Asp_carbamoyltransf_Asp/Orn-bd"/>
</dbReference>
<dbReference type="NCBIfam" id="TIGR00670">
    <property type="entry name" value="asp_carb_tr"/>
    <property type="match status" value="1"/>
</dbReference>
<dbReference type="NCBIfam" id="NF002032">
    <property type="entry name" value="PRK00856.1"/>
    <property type="match status" value="1"/>
</dbReference>
<dbReference type="PANTHER" id="PTHR45753:SF6">
    <property type="entry name" value="ASPARTATE CARBAMOYLTRANSFERASE"/>
    <property type="match status" value="1"/>
</dbReference>
<dbReference type="PANTHER" id="PTHR45753">
    <property type="entry name" value="ORNITHINE CARBAMOYLTRANSFERASE, MITOCHONDRIAL"/>
    <property type="match status" value="1"/>
</dbReference>
<dbReference type="Pfam" id="PF00185">
    <property type="entry name" value="OTCace"/>
    <property type="match status" value="1"/>
</dbReference>
<dbReference type="Pfam" id="PF02729">
    <property type="entry name" value="OTCace_N"/>
    <property type="match status" value="1"/>
</dbReference>
<dbReference type="PRINTS" id="PR00100">
    <property type="entry name" value="AOTCASE"/>
</dbReference>
<dbReference type="PRINTS" id="PR00101">
    <property type="entry name" value="ATCASE"/>
</dbReference>
<dbReference type="SUPFAM" id="SSF53671">
    <property type="entry name" value="Aspartate/ornithine carbamoyltransferase"/>
    <property type="match status" value="1"/>
</dbReference>
<dbReference type="PROSITE" id="PS00097">
    <property type="entry name" value="CARBAMOYLTRANSFERASE"/>
    <property type="match status" value="1"/>
</dbReference>
<proteinExistence type="inferred from homology"/>
<accession>Q7VIT3</accession>
<protein>
    <recommendedName>
        <fullName evidence="1">Aspartate carbamoyltransferase catalytic subunit</fullName>
        <ecNumber evidence="1">2.1.3.2</ecNumber>
    </recommendedName>
    <alternativeName>
        <fullName evidence="1">Aspartate transcarbamylase</fullName>
        <shortName evidence="1">ATCase</shortName>
    </alternativeName>
</protein>
<sequence length="297" mass="33351">MRPPKHLLRTSDLDNSQIETILQQAQTYKDMHHRENLKNKTIITIFFENSTRTLSSFEIAAKRLSADVVRLDVSKSSTTKGESMSDTAANLNAMNPSAIIIRHKNAGAGYYLKFQVSCPIINAGDGAHAHPTQALLDLLTLKEHFDNDLNNLKGKKIAIIGDIVNSRVANSNIELLSRFGMEVILVAPPHFLPSTHLRTCYSLREIAKEVDVFMSLRTQTERHDKQIYGSLKDYASQYCLTPEILSDRDVIVLHPGPVHRNIDIDDEVLKDPRCKVLEQVTNGVCVRMAVLEFCICT</sequence>